<proteinExistence type="inferred from homology"/>
<protein>
    <recommendedName>
        <fullName evidence="1">Peptidase T</fullName>
        <ecNumber evidence="1">3.4.11.4</ecNumber>
    </recommendedName>
    <alternativeName>
        <fullName evidence="1">Aminotripeptidase</fullName>
        <shortName evidence="1">Tripeptidase</shortName>
    </alternativeName>
    <alternativeName>
        <fullName evidence="1">Tripeptide aminopeptidase</fullName>
    </alternativeName>
</protein>
<name>PEPT_LISMH</name>
<feature type="chain" id="PRO_1000200890" description="Peptidase T">
    <location>
        <begin position="1"/>
        <end position="410"/>
    </location>
</feature>
<feature type="active site" evidence="1">
    <location>
        <position position="81"/>
    </location>
</feature>
<feature type="active site" description="Proton acceptor" evidence="1">
    <location>
        <position position="176"/>
    </location>
</feature>
<feature type="binding site" evidence="1">
    <location>
        <position position="79"/>
    </location>
    <ligand>
        <name>Zn(2+)</name>
        <dbReference type="ChEBI" id="CHEBI:29105"/>
        <label>1</label>
    </ligand>
</feature>
<feature type="binding site" evidence="1">
    <location>
        <position position="142"/>
    </location>
    <ligand>
        <name>Zn(2+)</name>
        <dbReference type="ChEBI" id="CHEBI:29105"/>
        <label>1</label>
    </ligand>
</feature>
<feature type="binding site" evidence="1">
    <location>
        <position position="142"/>
    </location>
    <ligand>
        <name>Zn(2+)</name>
        <dbReference type="ChEBI" id="CHEBI:29105"/>
        <label>2</label>
    </ligand>
</feature>
<feature type="binding site" evidence="1">
    <location>
        <position position="177"/>
    </location>
    <ligand>
        <name>Zn(2+)</name>
        <dbReference type="ChEBI" id="CHEBI:29105"/>
        <label>2</label>
    </ligand>
</feature>
<feature type="binding site" evidence="1">
    <location>
        <position position="199"/>
    </location>
    <ligand>
        <name>Zn(2+)</name>
        <dbReference type="ChEBI" id="CHEBI:29105"/>
        <label>1</label>
    </ligand>
</feature>
<feature type="binding site" evidence="1">
    <location>
        <position position="381"/>
    </location>
    <ligand>
        <name>Zn(2+)</name>
        <dbReference type="ChEBI" id="CHEBI:29105"/>
        <label>2</label>
    </ligand>
</feature>
<organism>
    <name type="scientific">Listeria monocytogenes serotype 4a (strain HCC23)</name>
    <dbReference type="NCBI Taxonomy" id="552536"/>
    <lineage>
        <taxon>Bacteria</taxon>
        <taxon>Bacillati</taxon>
        <taxon>Bacillota</taxon>
        <taxon>Bacilli</taxon>
        <taxon>Bacillales</taxon>
        <taxon>Listeriaceae</taxon>
        <taxon>Listeria</taxon>
    </lineage>
</organism>
<evidence type="ECO:0000255" key="1">
    <source>
        <dbReference type="HAMAP-Rule" id="MF_00550"/>
    </source>
</evidence>
<accession>B8DDX7</accession>
<sequence>MKEELLKRFTKYVKVDTQSNEESTVCPTTPGQMELANILVTELKEIGMQEVTVDEFGYVMATLPSNTTKEVPVIGFLAHLDTATDLTGKNVQPQVHENYDGKDIVLNKDLNVVLSPKQFPELADYKGKTLITTDGTTLLGADDKAGITEIMVAMNYLINHPEIKHGKIRVAFTPDEEIGRGPERFDVEAFGAKYAYTMDGGPLGELEYESFNAAGAKITFNGNSVHPGTAKNKMVNAVKMAMEFNARIPKDEAPEYTEGYEGFYHLISLNGDVEQAKAYYIIRDFDHLKFVERKTHIASIAKELEEKYGEGSVELKLNDQYYNMREKIEPVKEIVDIVSAAMRNLDIEPKISPIRGGTDGAQLSYKGLPTPNIFGGGENFHGKFEYVALESMVKATEVIIEVARLFEEKE</sequence>
<dbReference type="EC" id="3.4.11.4" evidence="1"/>
<dbReference type="EMBL" id="CP001175">
    <property type="protein sequence ID" value="ACK39136.1"/>
    <property type="molecule type" value="Genomic_DNA"/>
</dbReference>
<dbReference type="RefSeq" id="WP_012581142.1">
    <property type="nucleotide sequence ID" value="NC_011660.1"/>
</dbReference>
<dbReference type="SMR" id="B8DDX7"/>
<dbReference type="MEROPS" id="M20.003"/>
<dbReference type="KEGG" id="lmh:LMHCC_0782"/>
<dbReference type="HOGENOM" id="CLU_053676_0_0_9"/>
<dbReference type="GO" id="GO:0005829">
    <property type="term" value="C:cytosol"/>
    <property type="evidence" value="ECO:0007669"/>
    <property type="project" value="TreeGrafter"/>
</dbReference>
<dbReference type="GO" id="GO:0008237">
    <property type="term" value="F:metallopeptidase activity"/>
    <property type="evidence" value="ECO:0007669"/>
    <property type="project" value="UniProtKB-KW"/>
</dbReference>
<dbReference type="GO" id="GO:0045148">
    <property type="term" value="F:tripeptide aminopeptidase activity"/>
    <property type="evidence" value="ECO:0007669"/>
    <property type="project" value="UniProtKB-UniRule"/>
</dbReference>
<dbReference type="GO" id="GO:0008270">
    <property type="term" value="F:zinc ion binding"/>
    <property type="evidence" value="ECO:0007669"/>
    <property type="project" value="UniProtKB-UniRule"/>
</dbReference>
<dbReference type="GO" id="GO:0043171">
    <property type="term" value="P:peptide catabolic process"/>
    <property type="evidence" value="ECO:0007669"/>
    <property type="project" value="UniProtKB-UniRule"/>
</dbReference>
<dbReference type="GO" id="GO:0006508">
    <property type="term" value="P:proteolysis"/>
    <property type="evidence" value="ECO:0007669"/>
    <property type="project" value="UniProtKB-UniRule"/>
</dbReference>
<dbReference type="CDD" id="cd03892">
    <property type="entry name" value="M20_peptT"/>
    <property type="match status" value="1"/>
</dbReference>
<dbReference type="FunFam" id="3.30.70.360:FF:000002">
    <property type="entry name" value="Peptidase T"/>
    <property type="match status" value="1"/>
</dbReference>
<dbReference type="Gene3D" id="3.30.70.360">
    <property type="match status" value="1"/>
</dbReference>
<dbReference type="Gene3D" id="3.40.630.10">
    <property type="entry name" value="Zn peptidases"/>
    <property type="match status" value="1"/>
</dbReference>
<dbReference type="HAMAP" id="MF_00550">
    <property type="entry name" value="Aminopeptidase_M20"/>
    <property type="match status" value="1"/>
</dbReference>
<dbReference type="InterPro" id="IPR001261">
    <property type="entry name" value="ArgE/DapE_CS"/>
</dbReference>
<dbReference type="InterPro" id="IPR036264">
    <property type="entry name" value="Bact_exopeptidase_dim_dom"/>
</dbReference>
<dbReference type="InterPro" id="IPR002933">
    <property type="entry name" value="Peptidase_M20"/>
</dbReference>
<dbReference type="InterPro" id="IPR011650">
    <property type="entry name" value="Peptidase_M20_dimer"/>
</dbReference>
<dbReference type="InterPro" id="IPR010161">
    <property type="entry name" value="Peptidase_M20B"/>
</dbReference>
<dbReference type="NCBIfam" id="TIGR01882">
    <property type="entry name" value="peptidase-T"/>
    <property type="match status" value="1"/>
</dbReference>
<dbReference type="NCBIfam" id="NF003976">
    <property type="entry name" value="PRK05469.1"/>
    <property type="match status" value="1"/>
</dbReference>
<dbReference type="NCBIfam" id="NF009920">
    <property type="entry name" value="PRK13381.1"/>
    <property type="match status" value="1"/>
</dbReference>
<dbReference type="PANTHER" id="PTHR42994">
    <property type="entry name" value="PEPTIDASE T"/>
    <property type="match status" value="1"/>
</dbReference>
<dbReference type="PANTHER" id="PTHR42994:SF1">
    <property type="entry name" value="PEPTIDASE T"/>
    <property type="match status" value="1"/>
</dbReference>
<dbReference type="Pfam" id="PF07687">
    <property type="entry name" value="M20_dimer"/>
    <property type="match status" value="1"/>
</dbReference>
<dbReference type="Pfam" id="PF01546">
    <property type="entry name" value="Peptidase_M20"/>
    <property type="match status" value="1"/>
</dbReference>
<dbReference type="PIRSF" id="PIRSF037215">
    <property type="entry name" value="Peptidase_M20B"/>
    <property type="match status" value="1"/>
</dbReference>
<dbReference type="SUPFAM" id="SSF55031">
    <property type="entry name" value="Bacterial exopeptidase dimerisation domain"/>
    <property type="match status" value="1"/>
</dbReference>
<dbReference type="SUPFAM" id="SSF53187">
    <property type="entry name" value="Zn-dependent exopeptidases"/>
    <property type="match status" value="1"/>
</dbReference>
<dbReference type="PROSITE" id="PS00758">
    <property type="entry name" value="ARGE_DAPE_CPG2_1"/>
    <property type="match status" value="1"/>
</dbReference>
<dbReference type="PROSITE" id="PS00759">
    <property type="entry name" value="ARGE_DAPE_CPG2_2"/>
    <property type="match status" value="1"/>
</dbReference>
<gene>
    <name evidence="1" type="primary">pepT</name>
    <name type="ordered locus">LMHCC_0782</name>
</gene>
<comment type="function">
    <text evidence="1">Cleaves the N-terminal amino acid of tripeptides.</text>
</comment>
<comment type="catalytic activity">
    <reaction evidence="1">
        <text>Release of the N-terminal residue from a tripeptide.</text>
        <dbReference type="EC" id="3.4.11.4"/>
    </reaction>
</comment>
<comment type="cofactor">
    <cofactor evidence="1">
        <name>Zn(2+)</name>
        <dbReference type="ChEBI" id="CHEBI:29105"/>
    </cofactor>
    <text evidence="1">Binds 2 Zn(2+) ions per subunit.</text>
</comment>
<comment type="subcellular location">
    <subcellularLocation>
        <location evidence="1">Cytoplasm</location>
    </subcellularLocation>
</comment>
<comment type="similarity">
    <text evidence="1">Belongs to the peptidase M20B family.</text>
</comment>
<reference key="1">
    <citation type="journal article" date="2011" name="J. Bacteriol.">
        <title>Genome sequence of lineage III Listeria monocytogenes strain HCC23.</title>
        <authorList>
            <person name="Steele C.L."/>
            <person name="Donaldson J.R."/>
            <person name="Paul D."/>
            <person name="Banes M.M."/>
            <person name="Arick T."/>
            <person name="Bridges S.M."/>
            <person name="Lawrence M.L."/>
        </authorList>
    </citation>
    <scope>NUCLEOTIDE SEQUENCE [LARGE SCALE GENOMIC DNA]</scope>
    <source>
        <strain>HCC23</strain>
    </source>
</reference>
<keyword id="KW-0031">Aminopeptidase</keyword>
<keyword id="KW-0963">Cytoplasm</keyword>
<keyword id="KW-0378">Hydrolase</keyword>
<keyword id="KW-0479">Metal-binding</keyword>
<keyword id="KW-0482">Metalloprotease</keyword>
<keyword id="KW-0645">Protease</keyword>
<keyword id="KW-0862">Zinc</keyword>